<protein>
    <recommendedName>
        <fullName>Ras guanine nucleotide exchange factor P</fullName>
    </recommendedName>
    <alternativeName>
        <fullName>RasGEF domain-containing protein P</fullName>
    </alternativeName>
</protein>
<sequence length="1502" mass="168949">MNDSTQILDESGDFSFLSLNENKSRSRSTSTCSINSVEIIDGGSCDSSGDDDKNNSYLDEEKKRILRKTYLYFNANNKKTQLNFIIDNQVLDWIFNQTKTKISKPICESLKNGVALCKIINLIKPNTIKKINLNSSIFSYRENLTNFTKGCESIGMTEDMSRFQELVFEDKESAVLQLLYSLMKFSEKILPNTISTSPPSQLNICKSPVLLKKAAAQSSSSSPTTSTSASTSTSTSPSSSNESIAKPILSALSSSSSTLFSAAPTPTSTNTVPYKFIGHSKSKLFGQQQQQQQQQQQQQQQQQQQQQQQQQQQQQQQQQQQQQQQQQQPPPQTSTCTTTQPTTTTTEEHKLAPPPPLIVPNTSSLPPPQPTTSSIIKKAAPAPLKKPSPANTSSNSLLNHLPPPPSSSSTASSAINTPISTPSTSKSNSFQKPNNNFQKPIQIAHVEPIIEENEIEDNTNNNNNNNNNNNNNNNNNNNNNNNNNNNNNNNNTNDNINNNNKNNNNNQNENEDEVKPVHSPPKVRPPLPSRVGRGQLLRSSSEEIQFDIENASVSEAPSPVMTMNEDYSIVTDANSLTNHYNGANEYTTTTTAATTNLPNESSSRSNSASSNGDQNNNNNNNNNNNNNNNNNNNNNNNNNNNNNNNNLQLPAKINSEPNNQYNTISTSSPSTTGTILESPNGSSIFSQPLNNNNNINNENNNSNNSNSLVTSSSPPLSLPAYSANGSPNCPQGKKQRSGTKLRSFFGVKSKPESKSVSNFYGVGNSINQPPSNSSPKQSPVPNNPPSVSQSFLNLSMNSKSSKKKKDNISPDINSNSNNNNNNNNNNNNNNNNNNNNNNNNNNNNNNNNNNNNNLEEDENPLTMSNQSANSLKSSGNHFEDDITNGNNNISQNQNQNQNQNQNQTQNQNQNQNQNHISHSNSISSGNLNNHVNQNNNVNEESVDSELMKALSKVEFLFKDRKVLKERINFTYPEKYLKFFVNMDELIQIDNSTTFLTESLLSKRPSQQLELCHQEERRFLSEIVTLQNVLNVVEENKNLITRTEEMQKMIDSLMKEKKELINEKNTLASMLAKTKQQQQQQSNDTVSQRKMVDDGIVYNYNHGKYEIKGGTTEKLIELLYNSEFIGSDYFETFLLTYRSFASPKRVMDVLTKTYNENYSVEGNATDDVEKRLELDQFNKQRKDTHLKICNFLKRWVEKHFYDFDQDLLQEFNTFIANCRVINHQDFLQKTLNKKLIPLSSSELKLVFSTPTPAPILPKTPITCFEDMDPAEIARQLTLIEFNLFKNIANKEFLSLSWQKQDKEKRSPNLLKMIYRFNEVSNWVTSTIVKETTNIKKRASYLKRFIKLAEELRKLNNFNGVFVIVSGLHSASVNRLKNTWAEISKQQQKQFEEFVALTSPQSSFASYRLELRQSTGASIPYLGVHLSDLTFVEEGNQDKLENGYTNFSKCRLIAEQIKAIQEFQQEPYNLREVEEMIPFITHKAVPESECFNLSLICEPRESVN</sequence>
<feature type="chain" id="PRO_0000384474" description="Ras guanine nucleotide exchange factor P">
    <location>
        <begin position="1"/>
        <end position="1502"/>
    </location>
</feature>
<feature type="domain" description="Calponin-homology (CH)" evidence="3">
    <location>
        <begin position="84"/>
        <end position="187"/>
    </location>
</feature>
<feature type="domain" description="N-terminal Ras-GEF" evidence="4">
    <location>
        <begin position="1102"/>
        <end position="1249"/>
    </location>
</feature>
<feature type="domain" description="Ras-GEF" evidence="5">
    <location>
        <begin position="1267"/>
        <end position="1498"/>
    </location>
</feature>
<feature type="region of interest" description="Disordered" evidence="6">
    <location>
        <begin position="216"/>
        <end position="242"/>
    </location>
</feature>
<feature type="region of interest" description="Disordered" evidence="6">
    <location>
        <begin position="325"/>
        <end position="436"/>
    </location>
</feature>
<feature type="region of interest" description="Disordered" evidence="6">
    <location>
        <begin position="456"/>
        <end position="534"/>
    </location>
</feature>
<feature type="region of interest" description="Disordered" evidence="6">
    <location>
        <begin position="589"/>
        <end position="935"/>
    </location>
</feature>
<feature type="coiled-coil region" evidence="2">
    <location>
        <begin position="287"/>
        <end position="328"/>
    </location>
</feature>
<feature type="coiled-coil region" evidence="2">
    <location>
        <begin position="451"/>
        <end position="515"/>
    </location>
</feature>
<feature type="coiled-coil region" evidence="2">
    <location>
        <begin position="1032"/>
        <end position="1076"/>
    </location>
</feature>
<feature type="compositionally biased region" description="Low complexity" evidence="6">
    <location>
        <begin position="218"/>
        <end position="242"/>
    </location>
</feature>
<feature type="compositionally biased region" description="Low complexity" evidence="6">
    <location>
        <begin position="325"/>
        <end position="345"/>
    </location>
</feature>
<feature type="compositionally biased region" description="Low complexity" evidence="6">
    <location>
        <begin position="371"/>
        <end position="400"/>
    </location>
</feature>
<feature type="compositionally biased region" description="Low complexity" evidence="6">
    <location>
        <begin position="407"/>
        <end position="421"/>
    </location>
</feature>
<feature type="compositionally biased region" description="Polar residues" evidence="6">
    <location>
        <begin position="422"/>
        <end position="436"/>
    </location>
</feature>
<feature type="compositionally biased region" description="Low complexity" evidence="6">
    <location>
        <begin position="458"/>
        <end position="508"/>
    </location>
</feature>
<feature type="compositionally biased region" description="Pro residues" evidence="6">
    <location>
        <begin position="518"/>
        <end position="528"/>
    </location>
</feature>
<feature type="compositionally biased region" description="Low complexity" evidence="6">
    <location>
        <begin position="589"/>
        <end position="646"/>
    </location>
</feature>
<feature type="compositionally biased region" description="Low complexity" evidence="6">
    <location>
        <begin position="663"/>
        <end position="675"/>
    </location>
</feature>
<feature type="compositionally biased region" description="Low complexity" evidence="6">
    <location>
        <begin position="686"/>
        <end position="719"/>
    </location>
</feature>
<feature type="compositionally biased region" description="Low complexity" evidence="6">
    <location>
        <begin position="764"/>
        <end position="790"/>
    </location>
</feature>
<feature type="compositionally biased region" description="Low complexity" evidence="6">
    <location>
        <begin position="813"/>
        <end position="853"/>
    </location>
</feature>
<feature type="compositionally biased region" description="Polar residues" evidence="6">
    <location>
        <begin position="861"/>
        <end position="876"/>
    </location>
</feature>
<feature type="compositionally biased region" description="Low complexity" evidence="6">
    <location>
        <begin position="883"/>
        <end position="935"/>
    </location>
</feature>
<feature type="sequence conflict" description="In Ref. 1; AAN46885." evidence="8" ref="1">
    <original>S</original>
    <variation>P</variation>
    <location>
        <position position="109"/>
    </location>
</feature>
<feature type="sequence conflict" description="In Ref. 1; AAN46885." evidence="8" ref="1">
    <original>F</original>
    <variation>C</variation>
    <location>
        <position position="185"/>
    </location>
</feature>
<gene>
    <name type="primary">gefP</name>
    <name type="synonym">rasGEFP</name>
    <name type="ORF">DDB_G0281573</name>
</gene>
<evidence type="ECO:0000250" key="1"/>
<evidence type="ECO:0000255" key="2"/>
<evidence type="ECO:0000255" key="3">
    <source>
        <dbReference type="PROSITE-ProRule" id="PRU00044"/>
    </source>
</evidence>
<evidence type="ECO:0000255" key="4">
    <source>
        <dbReference type="PROSITE-ProRule" id="PRU00135"/>
    </source>
</evidence>
<evidence type="ECO:0000255" key="5">
    <source>
        <dbReference type="PROSITE-ProRule" id="PRU00168"/>
    </source>
</evidence>
<evidence type="ECO:0000256" key="6">
    <source>
        <dbReference type="SAM" id="MobiDB-lite"/>
    </source>
</evidence>
<evidence type="ECO:0000269" key="7">
    <source>
    </source>
</evidence>
<evidence type="ECO:0000305" key="8"/>
<proteinExistence type="evidence at transcript level"/>
<keyword id="KW-0175">Coiled coil</keyword>
<keyword id="KW-0344">Guanine-nucleotide releasing factor</keyword>
<keyword id="KW-1185">Reference proteome</keyword>
<name>GEFP_DICDI</name>
<organism>
    <name type="scientific">Dictyostelium discoideum</name>
    <name type="common">Social amoeba</name>
    <dbReference type="NCBI Taxonomy" id="44689"/>
    <lineage>
        <taxon>Eukaryota</taxon>
        <taxon>Amoebozoa</taxon>
        <taxon>Evosea</taxon>
        <taxon>Eumycetozoa</taxon>
        <taxon>Dictyostelia</taxon>
        <taxon>Dictyosteliales</taxon>
        <taxon>Dictyosteliaceae</taxon>
        <taxon>Dictyostelium</taxon>
    </lineage>
</organism>
<comment type="function">
    <text evidence="1">Promotes the exchange of Ras-bound GDP by GTP.</text>
</comment>
<comment type="developmental stage">
    <text evidence="7">Faintly expressed during development.</text>
</comment>
<dbReference type="EMBL" id="AY160105">
    <property type="protein sequence ID" value="AAN46885.1"/>
    <property type="molecule type" value="Genomic_DNA"/>
</dbReference>
<dbReference type="EMBL" id="AAFI02000042">
    <property type="protein sequence ID" value="EAL66548.1"/>
    <property type="molecule type" value="Genomic_DNA"/>
</dbReference>
<dbReference type="RefSeq" id="XP_640583.1">
    <property type="nucleotide sequence ID" value="XM_635491.1"/>
</dbReference>
<dbReference type="SMR" id="Q54TK8"/>
<dbReference type="FunCoup" id="Q54TK8">
    <property type="interactions" value="455"/>
</dbReference>
<dbReference type="STRING" id="44689.Q54TK8"/>
<dbReference type="GlyGen" id="Q54TK8">
    <property type="glycosylation" value="2 sites"/>
</dbReference>
<dbReference type="PaxDb" id="44689-DDB0215009"/>
<dbReference type="EnsemblProtists" id="EAL66548">
    <property type="protein sequence ID" value="EAL66548"/>
    <property type="gene ID" value="DDB_G0281573"/>
</dbReference>
<dbReference type="GeneID" id="8623191"/>
<dbReference type="KEGG" id="ddi:DDB_G0281573"/>
<dbReference type="dictyBase" id="DDB_G0281573">
    <property type="gene designation" value="gefP"/>
</dbReference>
<dbReference type="VEuPathDB" id="AmoebaDB:DDB_G0281573"/>
<dbReference type="eggNOG" id="KOG3417">
    <property type="taxonomic scope" value="Eukaryota"/>
</dbReference>
<dbReference type="HOGENOM" id="CLU_248639_0_0_1"/>
<dbReference type="InParanoid" id="Q54TK8"/>
<dbReference type="OMA" id="CNFLKRW"/>
<dbReference type="Reactome" id="R-DDI-193648">
    <property type="pathway name" value="NRAGE signals death through JNK"/>
</dbReference>
<dbReference type="Reactome" id="R-DDI-354192">
    <property type="pathway name" value="Integrin signaling"/>
</dbReference>
<dbReference type="Reactome" id="R-DDI-381676">
    <property type="pathway name" value="Glucagon-like Peptide-1 (GLP1) regulates insulin secretion"/>
</dbReference>
<dbReference type="Reactome" id="R-DDI-392517">
    <property type="pathway name" value="Rap1 signalling"/>
</dbReference>
<dbReference type="Reactome" id="R-DDI-9013149">
    <property type="pathway name" value="RAC1 GTPase cycle"/>
</dbReference>
<dbReference type="Reactome" id="R-DDI-9013423">
    <property type="pathway name" value="RAC3 GTPase cycle"/>
</dbReference>
<dbReference type="PRO" id="PR:Q54TK8"/>
<dbReference type="Proteomes" id="UP000002195">
    <property type="component" value="Chromosome 3"/>
</dbReference>
<dbReference type="GO" id="GO:0005886">
    <property type="term" value="C:plasma membrane"/>
    <property type="evidence" value="ECO:0000318"/>
    <property type="project" value="GO_Central"/>
</dbReference>
<dbReference type="GO" id="GO:0005085">
    <property type="term" value="F:guanyl-nucleotide exchange factor activity"/>
    <property type="evidence" value="ECO:0000318"/>
    <property type="project" value="GO_Central"/>
</dbReference>
<dbReference type="GO" id="GO:0007265">
    <property type="term" value="P:Ras protein signal transduction"/>
    <property type="evidence" value="ECO:0000318"/>
    <property type="project" value="GO_Central"/>
</dbReference>
<dbReference type="CDD" id="cd00155">
    <property type="entry name" value="RasGEF"/>
    <property type="match status" value="1"/>
</dbReference>
<dbReference type="CDD" id="cd06224">
    <property type="entry name" value="REM"/>
    <property type="match status" value="1"/>
</dbReference>
<dbReference type="Gene3D" id="1.10.418.10">
    <property type="entry name" value="Calponin-like domain"/>
    <property type="match status" value="1"/>
</dbReference>
<dbReference type="Gene3D" id="1.10.840.10">
    <property type="entry name" value="Ras guanine-nucleotide exchange factors catalytic domain"/>
    <property type="match status" value="1"/>
</dbReference>
<dbReference type="Gene3D" id="1.20.870.10">
    <property type="entry name" value="Son of sevenless (SoS) protein Chain: S domain 1"/>
    <property type="match status" value="1"/>
</dbReference>
<dbReference type="InterPro" id="IPR001715">
    <property type="entry name" value="CH_dom"/>
</dbReference>
<dbReference type="InterPro" id="IPR036872">
    <property type="entry name" value="CH_dom_sf"/>
</dbReference>
<dbReference type="InterPro" id="IPR008937">
    <property type="entry name" value="Ras-like_GEF"/>
</dbReference>
<dbReference type="InterPro" id="IPR000651">
    <property type="entry name" value="Ras-like_Gua-exchang_fac_N"/>
</dbReference>
<dbReference type="InterPro" id="IPR023578">
    <property type="entry name" value="Ras_GEF_dom_sf"/>
</dbReference>
<dbReference type="InterPro" id="IPR001895">
    <property type="entry name" value="RASGEF_cat_dom"/>
</dbReference>
<dbReference type="InterPro" id="IPR036964">
    <property type="entry name" value="RASGEF_cat_dom_sf"/>
</dbReference>
<dbReference type="PANTHER" id="PTHR23113">
    <property type="entry name" value="GUANINE NUCLEOTIDE EXCHANGE FACTOR"/>
    <property type="match status" value="1"/>
</dbReference>
<dbReference type="PANTHER" id="PTHR23113:SF370">
    <property type="entry name" value="RAS GUANINE NUCLEOTIDE EXCHANGE FACTOR P"/>
    <property type="match status" value="1"/>
</dbReference>
<dbReference type="Pfam" id="PF00307">
    <property type="entry name" value="CH"/>
    <property type="match status" value="1"/>
</dbReference>
<dbReference type="Pfam" id="PF00617">
    <property type="entry name" value="RasGEF"/>
    <property type="match status" value="1"/>
</dbReference>
<dbReference type="Pfam" id="PF00618">
    <property type="entry name" value="RasGEF_N"/>
    <property type="match status" value="1"/>
</dbReference>
<dbReference type="SMART" id="SM00033">
    <property type="entry name" value="CH"/>
    <property type="match status" value="1"/>
</dbReference>
<dbReference type="SMART" id="SM00147">
    <property type="entry name" value="RasGEF"/>
    <property type="match status" value="1"/>
</dbReference>
<dbReference type="SMART" id="SM00229">
    <property type="entry name" value="RasGEFN"/>
    <property type="match status" value="1"/>
</dbReference>
<dbReference type="SUPFAM" id="SSF47576">
    <property type="entry name" value="Calponin-homology domain, CH-domain"/>
    <property type="match status" value="1"/>
</dbReference>
<dbReference type="SUPFAM" id="SSF48366">
    <property type="entry name" value="Ras GEF"/>
    <property type="match status" value="1"/>
</dbReference>
<dbReference type="PROSITE" id="PS50021">
    <property type="entry name" value="CH"/>
    <property type="match status" value="1"/>
</dbReference>
<dbReference type="PROSITE" id="PS50009">
    <property type="entry name" value="RASGEF_CAT"/>
    <property type="match status" value="1"/>
</dbReference>
<dbReference type="PROSITE" id="PS50212">
    <property type="entry name" value="RASGEF_NTER"/>
    <property type="match status" value="1"/>
</dbReference>
<accession>Q54TK8</accession>
<accession>Q8IS10</accession>
<reference key="1">
    <citation type="journal article" date="2005" name="Genome Biol.">
        <title>The Dictyostelium genome encodes numerous RasGEFs with multiple biological roles.</title>
        <authorList>
            <person name="Wilkins A."/>
            <person name="Szafranski K."/>
            <person name="Fraser D.J."/>
            <person name="Bakthavatsalam D."/>
            <person name="Mueller R."/>
            <person name="Fisher P.R."/>
            <person name="Gloeckner G."/>
            <person name="Eichinger L."/>
            <person name="Noegel A.A."/>
            <person name="Insall R.H."/>
        </authorList>
    </citation>
    <scope>NUCLEOTIDE SEQUENCE [GENOMIC DNA]</scope>
    <scope>DEVELOPMENTAL STAGE</scope>
    <source>
        <strain>AX4</strain>
    </source>
</reference>
<reference key="2">
    <citation type="journal article" date="2005" name="Nature">
        <title>The genome of the social amoeba Dictyostelium discoideum.</title>
        <authorList>
            <person name="Eichinger L."/>
            <person name="Pachebat J.A."/>
            <person name="Gloeckner G."/>
            <person name="Rajandream M.A."/>
            <person name="Sucgang R."/>
            <person name="Berriman M."/>
            <person name="Song J."/>
            <person name="Olsen R."/>
            <person name="Szafranski K."/>
            <person name="Xu Q."/>
            <person name="Tunggal B."/>
            <person name="Kummerfeld S."/>
            <person name="Madera M."/>
            <person name="Konfortov B.A."/>
            <person name="Rivero F."/>
            <person name="Bankier A.T."/>
            <person name="Lehmann R."/>
            <person name="Hamlin N."/>
            <person name="Davies R."/>
            <person name="Gaudet P."/>
            <person name="Fey P."/>
            <person name="Pilcher K."/>
            <person name="Chen G."/>
            <person name="Saunders D."/>
            <person name="Sodergren E.J."/>
            <person name="Davis P."/>
            <person name="Kerhornou A."/>
            <person name="Nie X."/>
            <person name="Hall N."/>
            <person name="Anjard C."/>
            <person name="Hemphill L."/>
            <person name="Bason N."/>
            <person name="Farbrother P."/>
            <person name="Desany B."/>
            <person name="Just E."/>
            <person name="Morio T."/>
            <person name="Rost R."/>
            <person name="Churcher C.M."/>
            <person name="Cooper J."/>
            <person name="Haydock S."/>
            <person name="van Driessche N."/>
            <person name="Cronin A."/>
            <person name="Goodhead I."/>
            <person name="Muzny D.M."/>
            <person name="Mourier T."/>
            <person name="Pain A."/>
            <person name="Lu M."/>
            <person name="Harper D."/>
            <person name="Lindsay R."/>
            <person name="Hauser H."/>
            <person name="James K.D."/>
            <person name="Quiles M."/>
            <person name="Madan Babu M."/>
            <person name="Saito T."/>
            <person name="Buchrieser C."/>
            <person name="Wardroper A."/>
            <person name="Felder M."/>
            <person name="Thangavelu M."/>
            <person name="Johnson D."/>
            <person name="Knights A."/>
            <person name="Loulseged H."/>
            <person name="Mungall K.L."/>
            <person name="Oliver K."/>
            <person name="Price C."/>
            <person name="Quail M.A."/>
            <person name="Urushihara H."/>
            <person name="Hernandez J."/>
            <person name="Rabbinowitsch E."/>
            <person name="Steffen D."/>
            <person name="Sanders M."/>
            <person name="Ma J."/>
            <person name="Kohara Y."/>
            <person name="Sharp S."/>
            <person name="Simmonds M.N."/>
            <person name="Spiegler S."/>
            <person name="Tivey A."/>
            <person name="Sugano S."/>
            <person name="White B."/>
            <person name="Walker D."/>
            <person name="Woodward J.R."/>
            <person name="Winckler T."/>
            <person name="Tanaka Y."/>
            <person name="Shaulsky G."/>
            <person name="Schleicher M."/>
            <person name="Weinstock G.M."/>
            <person name="Rosenthal A."/>
            <person name="Cox E.C."/>
            <person name="Chisholm R.L."/>
            <person name="Gibbs R.A."/>
            <person name="Loomis W.F."/>
            <person name="Platzer M."/>
            <person name="Kay R.R."/>
            <person name="Williams J.G."/>
            <person name="Dear P.H."/>
            <person name="Noegel A.A."/>
            <person name="Barrell B.G."/>
            <person name="Kuspa A."/>
        </authorList>
    </citation>
    <scope>NUCLEOTIDE SEQUENCE [LARGE SCALE GENOMIC DNA]</scope>
    <source>
        <strain>AX4</strain>
    </source>
</reference>